<accession>Q500T0</accession>
<keyword id="KW-0648">Protein biosynthesis</keyword>
<keyword id="KW-0808">Transferase</keyword>
<feature type="chain" id="PRO_1000020136" description="Methionyl-tRNA formyltransferase">
    <location>
        <begin position="1"/>
        <end position="314"/>
    </location>
</feature>
<feature type="binding site" evidence="1">
    <location>
        <begin position="113"/>
        <end position="116"/>
    </location>
    <ligand>
        <name>(6S)-5,6,7,8-tetrahydrofolate</name>
        <dbReference type="ChEBI" id="CHEBI:57453"/>
    </ligand>
</feature>
<proteinExistence type="inferred from homology"/>
<name>FMT_PSEU2</name>
<evidence type="ECO:0000255" key="1">
    <source>
        <dbReference type="HAMAP-Rule" id="MF_00182"/>
    </source>
</evidence>
<gene>
    <name evidence="1" type="primary">fmt</name>
    <name type="ordered locus">Psyr_0018</name>
</gene>
<comment type="function">
    <text evidence="1">Attaches a formyl group to the free amino group of methionyl-tRNA(fMet). The formyl group appears to play a dual role in the initiator identity of N-formylmethionyl-tRNA by promoting its recognition by IF2 and preventing the misappropriation of this tRNA by the elongation apparatus.</text>
</comment>
<comment type="catalytic activity">
    <reaction evidence="1">
        <text>L-methionyl-tRNA(fMet) + (6R)-10-formyltetrahydrofolate = N-formyl-L-methionyl-tRNA(fMet) + (6S)-5,6,7,8-tetrahydrofolate + H(+)</text>
        <dbReference type="Rhea" id="RHEA:24380"/>
        <dbReference type="Rhea" id="RHEA-COMP:9952"/>
        <dbReference type="Rhea" id="RHEA-COMP:9953"/>
        <dbReference type="ChEBI" id="CHEBI:15378"/>
        <dbReference type="ChEBI" id="CHEBI:57453"/>
        <dbReference type="ChEBI" id="CHEBI:78530"/>
        <dbReference type="ChEBI" id="CHEBI:78844"/>
        <dbReference type="ChEBI" id="CHEBI:195366"/>
        <dbReference type="EC" id="2.1.2.9"/>
    </reaction>
</comment>
<comment type="similarity">
    <text evidence="1">Belongs to the Fmt family.</text>
</comment>
<reference key="1">
    <citation type="journal article" date="2005" name="Proc. Natl. Acad. Sci. U.S.A.">
        <title>Comparison of the complete genome sequences of Pseudomonas syringae pv. syringae B728a and pv. tomato DC3000.</title>
        <authorList>
            <person name="Feil H."/>
            <person name="Feil W.S."/>
            <person name="Chain P."/>
            <person name="Larimer F."/>
            <person name="Dibartolo G."/>
            <person name="Copeland A."/>
            <person name="Lykidis A."/>
            <person name="Trong S."/>
            <person name="Nolan M."/>
            <person name="Goltsman E."/>
            <person name="Thiel J."/>
            <person name="Malfatti S."/>
            <person name="Loper J.E."/>
            <person name="Lapidus A."/>
            <person name="Detter J.C."/>
            <person name="Land M."/>
            <person name="Richardson P.M."/>
            <person name="Kyrpides N.C."/>
            <person name="Ivanova N."/>
            <person name="Lindow S.E."/>
        </authorList>
    </citation>
    <scope>NUCLEOTIDE SEQUENCE [LARGE SCALE GENOMIC DNA]</scope>
    <source>
        <strain>B728a</strain>
    </source>
</reference>
<protein>
    <recommendedName>
        <fullName evidence="1">Methionyl-tRNA formyltransferase</fullName>
        <ecNumber evidence="1">2.1.2.9</ecNumber>
    </recommendedName>
</protein>
<sequence>MTEPLRIVFAGTPEFAAEHLKALLDSPHQIVAVYTQPDRPAGRGQKLMPSPVKQLALQHDVPVMQPPTLRDPAAQAELAALQPDLMVVVAYGLILPQVVLDIPRLGCINSHASLLPRWRGAAPIQRAVQAGDAESGVTVMRMEAGLDTGPMLLKAVTPITAQDTGGTLHDRLAELGPPAVLQAIAGLADGTLVGEVQDDSLANYAHKLNKDEARLDWTRPADELERLVRAFNPWPICHSTLNEETLKVLAADLAEGQGAPGTILGASKDGLIVACGQNALRLTRLQLPGGKPLNFTDLFNSRREKFAIGTVLGQ</sequence>
<organism>
    <name type="scientific">Pseudomonas syringae pv. syringae (strain B728a)</name>
    <dbReference type="NCBI Taxonomy" id="205918"/>
    <lineage>
        <taxon>Bacteria</taxon>
        <taxon>Pseudomonadati</taxon>
        <taxon>Pseudomonadota</taxon>
        <taxon>Gammaproteobacteria</taxon>
        <taxon>Pseudomonadales</taxon>
        <taxon>Pseudomonadaceae</taxon>
        <taxon>Pseudomonas</taxon>
        <taxon>Pseudomonas syringae</taxon>
    </lineage>
</organism>
<dbReference type="EC" id="2.1.2.9" evidence="1"/>
<dbReference type="EMBL" id="CP000075">
    <property type="protein sequence ID" value="AAY35092.1"/>
    <property type="molecule type" value="Genomic_DNA"/>
</dbReference>
<dbReference type="RefSeq" id="WP_011266132.1">
    <property type="nucleotide sequence ID" value="NC_007005.1"/>
</dbReference>
<dbReference type="RefSeq" id="YP_233130.1">
    <property type="nucleotide sequence ID" value="NC_007005.1"/>
</dbReference>
<dbReference type="SMR" id="Q500T0"/>
<dbReference type="STRING" id="205918.Psyr_0018"/>
<dbReference type="KEGG" id="psb:Psyr_0018"/>
<dbReference type="PATRIC" id="fig|205918.7.peg.18"/>
<dbReference type="eggNOG" id="COG0223">
    <property type="taxonomic scope" value="Bacteria"/>
</dbReference>
<dbReference type="HOGENOM" id="CLU_033347_1_2_6"/>
<dbReference type="OrthoDB" id="9802815at2"/>
<dbReference type="Proteomes" id="UP000000426">
    <property type="component" value="Chromosome"/>
</dbReference>
<dbReference type="GO" id="GO:0005829">
    <property type="term" value="C:cytosol"/>
    <property type="evidence" value="ECO:0007669"/>
    <property type="project" value="TreeGrafter"/>
</dbReference>
<dbReference type="GO" id="GO:0004479">
    <property type="term" value="F:methionyl-tRNA formyltransferase activity"/>
    <property type="evidence" value="ECO:0007669"/>
    <property type="project" value="UniProtKB-UniRule"/>
</dbReference>
<dbReference type="CDD" id="cd08646">
    <property type="entry name" value="FMT_core_Met-tRNA-FMT_N"/>
    <property type="match status" value="1"/>
</dbReference>
<dbReference type="CDD" id="cd08704">
    <property type="entry name" value="Met_tRNA_FMT_C"/>
    <property type="match status" value="1"/>
</dbReference>
<dbReference type="FunFam" id="3.40.50.170:FF:000003">
    <property type="entry name" value="Methionyl-tRNA formyltransferase"/>
    <property type="match status" value="1"/>
</dbReference>
<dbReference type="Gene3D" id="3.10.25.10">
    <property type="entry name" value="Formyl transferase, C-terminal domain"/>
    <property type="match status" value="1"/>
</dbReference>
<dbReference type="Gene3D" id="3.40.50.170">
    <property type="entry name" value="Formyl transferase, N-terminal domain"/>
    <property type="match status" value="1"/>
</dbReference>
<dbReference type="HAMAP" id="MF_00182">
    <property type="entry name" value="Formyl_trans"/>
    <property type="match status" value="1"/>
</dbReference>
<dbReference type="InterPro" id="IPR005794">
    <property type="entry name" value="Fmt"/>
</dbReference>
<dbReference type="InterPro" id="IPR005793">
    <property type="entry name" value="Formyl_trans_C"/>
</dbReference>
<dbReference type="InterPro" id="IPR037022">
    <property type="entry name" value="Formyl_trans_C_sf"/>
</dbReference>
<dbReference type="InterPro" id="IPR002376">
    <property type="entry name" value="Formyl_transf_N"/>
</dbReference>
<dbReference type="InterPro" id="IPR036477">
    <property type="entry name" value="Formyl_transf_N_sf"/>
</dbReference>
<dbReference type="InterPro" id="IPR011034">
    <property type="entry name" value="Formyl_transferase-like_C_sf"/>
</dbReference>
<dbReference type="InterPro" id="IPR001555">
    <property type="entry name" value="GART_AS"/>
</dbReference>
<dbReference type="InterPro" id="IPR044135">
    <property type="entry name" value="Met-tRNA-FMT_C"/>
</dbReference>
<dbReference type="InterPro" id="IPR041711">
    <property type="entry name" value="Met-tRNA-FMT_N"/>
</dbReference>
<dbReference type="NCBIfam" id="TIGR00460">
    <property type="entry name" value="fmt"/>
    <property type="match status" value="1"/>
</dbReference>
<dbReference type="PANTHER" id="PTHR11138">
    <property type="entry name" value="METHIONYL-TRNA FORMYLTRANSFERASE"/>
    <property type="match status" value="1"/>
</dbReference>
<dbReference type="PANTHER" id="PTHR11138:SF5">
    <property type="entry name" value="METHIONYL-TRNA FORMYLTRANSFERASE, MITOCHONDRIAL"/>
    <property type="match status" value="1"/>
</dbReference>
<dbReference type="Pfam" id="PF02911">
    <property type="entry name" value="Formyl_trans_C"/>
    <property type="match status" value="1"/>
</dbReference>
<dbReference type="Pfam" id="PF00551">
    <property type="entry name" value="Formyl_trans_N"/>
    <property type="match status" value="1"/>
</dbReference>
<dbReference type="SUPFAM" id="SSF50486">
    <property type="entry name" value="FMT C-terminal domain-like"/>
    <property type="match status" value="1"/>
</dbReference>
<dbReference type="SUPFAM" id="SSF53328">
    <property type="entry name" value="Formyltransferase"/>
    <property type="match status" value="1"/>
</dbReference>
<dbReference type="PROSITE" id="PS00373">
    <property type="entry name" value="GART"/>
    <property type="match status" value="1"/>
</dbReference>